<sequence length="325" mass="34075">MRRYARITGTGSYLPPRRLTNHDLAAELAQRGIETSDEWIVERTGIHARHFAAPDVASSDLALEASKKALEAAGCQPQDIDLIIVATSTPDMVFPSTACILQNKLGANGCAAFDVQAVCSGFVYALTVADAMIQSGAASRALVVGSEVFSRILDFNDRTTCVLFGDGAGAVVLEASEQPGILASDLHADGKHVGILCVPGNVSGGQVLGDPLLKMDGQAVFKLAVGVLEKAARATLDKAGLTDADIDWLIPHQANIRIMQSTARKLKLSMDKVVVTVDQHGNTSAASIPLALDHGVRNGQVKPGQTVLLEGVGGGFTWGAVLLKM</sequence>
<keyword id="KW-0012">Acyltransferase</keyword>
<keyword id="KW-0963">Cytoplasm</keyword>
<keyword id="KW-0275">Fatty acid biosynthesis</keyword>
<keyword id="KW-0276">Fatty acid metabolism</keyword>
<keyword id="KW-0444">Lipid biosynthesis</keyword>
<keyword id="KW-0443">Lipid metabolism</keyword>
<keyword id="KW-0511">Multifunctional enzyme</keyword>
<keyword id="KW-1185">Reference proteome</keyword>
<keyword id="KW-0808">Transferase</keyword>
<protein>
    <recommendedName>
        <fullName evidence="1">Beta-ketoacyl-[acyl-carrier-protein] synthase III</fullName>
        <shortName evidence="1">Beta-ketoacyl-ACP synthase III</shortName>
        <shortName evidence="1">KAS III</shortName>
        <ecNumber evidence="1">2.3.1.180</ecNumber>
    </recommendedName>
    <alternativeName>
        <fullName evidence="1">3-oxoacyl-[acyl-carrier-protein] synthase 3</fullName>
    </alternativeName>
    <alternativeName>
        <fullName evidence="1">3-oxoacyl-[acyl-carrier-protein] synthase III</fullName>
    </alternativeName>
</protein>
<feature type="chain" id="PRO_1000187863" description="Beta-ketoacyl-[acyl-carrier-protein] synthase III">
    <location>
        <begin position="1"/>
        <end position="325"/>
    </location>
</feature>
<feature type="region of interest" description="ACP-binding" evidence="1">
    <location>
        <begin position="253"/>
        <end position="257"/>
    </location>
</feature>
<feature type="active site" evidence="1">
    <location>
        <position position="119"/>
    </location>
</feature>
<feature type="active site" evidence="1">
    <location>
        <position position="252"/>
    </location>
</feature>
<feature type="active site" evidence="1">
    <location>
        <position position="282"/>
    </location>
</feature>
<comment type="function">
    <text evidence="1">Catalyzes the condensation reaction of fatty acid synthesis by the addition to an acyl acceptor of two carbons from malonyl-ACP. Catalyzes the first condensation reaction which initiates fatty acid synthesis and may therefore play a role in governing the total rate of fatty acid production. Possesses both acetoacetyl-ACP synthase and acetyl transacylase activities. Its substrate specificity determines the biosynthesis of branched-chain and/or straight-chain of fatty acids.</text>
</comment>
<comment type="catalytic activity">
    <reaction evidence="1">
        <text>malonyl-[ACP] + acetyl-CoA + H(+) = 3-oxobutanoyl-[ACP] + CO2 + CoA</text>
        <dbReference type="Rhea" id="RHEA:12080"/>
        <dbReference type="Rhea" id="RHEA-COMP:9623"/>
        <dbReference type="Rhea" id="RHEA-COMP:9625"/>
        <dbReference type="ChEBI" id="CHEBI:15378"/>
        <dbReference type="ChEBI" id="CHEBI:16526"/>
        <dbReference type="ChEBI" id="CHEBI:57287"/>
        <dbReference type="ChEBI" id="CHEBI:57288"/>
        <dbReference type="ChEBI" id="CHEBI:78449"/>
        <dbReference type="ChEBI" id="CHEBI:78450"/>
        <dbReference type="EC" id="2.3.1.180"/>
    </reaction>
</comment>
<comment type="pathway">
    <text evidence="1">Lipid metabolism; fatty acid biosynthesis.</text>
</comment>
<comment type="subunit">
    <text evidence="1">Homodimer.</text>
</comment>
<comment type="subcellular location">
    <subcellularLocation>
        <location evidence="1">Cytoplasm</location>
    </subcellularLocation>
</comment>
<comment type="domain">
    <text evidence="1">The last Arg residue of the ACP-binding site is essential for the weak association between ACP/AcpP and FabH.</text>
</comment>
<comment type="similarity">
    <text evidence="1">Belongs to the thiolase-like superfamily. FabH family.</text>
</comment>
<dbReference type="EC" id="2.3.1.180" evidence="1"/>
<dbReference type="EMBL" id="CP000884">
    <property type="protein sequence ID" value="ABX37901.1"/>
    <property type="molecule type" value="Genomic_DNA"/>
</dbReference>
<dbReference type="RefSeq" id="WP_012207070.1">
    <property type="nucleotide sequence ID" value="NC_010002.1"/>
</dbReference>
<dbReference type="SMR" id="A9BNK6"/>
<dbReference type="STRING" id="398578.Daci_5272"/>
<dbReference type="GeneID" id="24117269"/>
<dbReference type="KEGG" id="dac:Daci_5272"/>
<dbReference type="eggNOG" id="COG0332">
    <property type="taxonomic scope" value="Bacteria"/>
</dbReference>
<dbReference type="HOGENOM" id="CLU_039592_3_1_4"/>
<dbReference type="UniPathway" id="UPA00094"/>
<dbReference type="Proteomes" id="UP000000784">
    <property type="component" value="Chromosome"/>
</dbReference>
<dbReference type="GO" id="GO:0005737">
    <property type="term" value="C:cytoplasm"/>
    <property type="evidence" value="ECO:0007669"/>
    <property type="project" value="UniProtKB-SubCell"/>
</dbReference>
<dbReference type="GO" id="GO:0004315">
    <property type="term" value="F:3-oxoacyl-[acyl-carrier-protein] synthase activity"/>
    <property type="evidence" value="ECO:0007669"/>
    <property type="project" value="InterPro"/>
</dbReference>
<dbReference type="GO" id="GO:0033818">
    <property type="term" value="F:beta-ketoacyl-acyl-carrier-protein synthase III activity"/>
    <property type="evidence" value="ECO:0007669"/>
    <property type="project" value="UniProtKB-UniRule"/>
</dbReference>
<dbReference type="GO" id="GO:0006633">
    <property type="term" value="P:fatty acid biosynthetic process"/>
    <property type="evidence" value="ECO:0007669"/>
    <property type="project" value="UniProtKB-UniRule"/>
</dbReference>
<dbReference type="GO" id="GO:0044550">
    <property type="term" value="P:secondary metabolite biosynthetic process"/>
    <property type="evidence" value="ECO:0007669"/>
    <property type="project" value="TreeGrafter"/>
</dbReference>
<dbReference type="CDD" id="cd00830">
    <property type="entry name" value="KAS_III"/>
    <property type="match status" value="1"/>
</dbReference>
<dbReference type="FunFam" id="3.40.47.10:FF:000004">
    <property type="entry name" value="3-oxoacyl-[acyl-carrier-protein] synthase 3"/>
    <property type="match status" value="1"/>
</dbReference>
<dbReference type="Gene3D" id="3.40.47.10">
    <property type="match status" value="1"/>
</dbReference>
<dbReference type="HAMAP" id="MF_01815">
    <property type="entry name" value="FabH"/>
    <property type="match status" value="1"/>
</dbReference>
<dbReference type="InterPro" id="IPR013747">
    <property type="entry name" value="ACP_syn_III_C"/>
</dbReference>
<dbReference type="InterPro" id="IPR013751">
    <property type="entry name" value="ACP_syn_III_N"/>
</dbReference>
<dbReference type="InterPro" id="IPR004655">
    <property type="entry name" value="FabH"/>
</dbReference>
<dbReference type="InterPro" id="IPR016039">
    <property type="entry name" value="Thiolase-like"/>
</dbReference>
<dbReference type="NCBIfam" id="TIGR00747">
    <property type="entry name" value="fabH"/>
    <property type="match status" value="1"/>
</dbReference>
<dbReference type="NCBIfam" id="NF006829">
    <property type="entry name" value="PRK09352.1"/>
    <property type="match status" value="1"/>
</dbReference>
<dbReference type="PANTHER" id="PTHR34069">
    <property type="entry name" value="3-OXOACYL-[ACYL-CARRIER-PROTEIN] SYNTHASE 3"/>
    <property type="match status" value="1"/>
</dbReference>
<dbReference type="PANTHER" id="PTHR34069:SF2">
    <property type="entry name" value="BETA-KETOACYL-[ACYL-CARRIER-PROTEIN] SYNTHASE III"/>
    <property type="match status" value="1"/>
</dbReference>
<dbReference type="Pfam" id="PF08545">
    <property type="entry name" value="ACP_syn_III"/>
    <property type="match status" value="1"/>
</dbReference>
<dbReference type="Pfam" id="PF08541">
    <property type="entry name" value="ACP_syn_III_C"/>
    <property type="match status" value="1"/>
</dbReference>
<dbReference type="SUPFAM" id="SSF53901">
    <property type="entry name" value="Thiolase-like"/>
    <property type="match status" value="1"/>
</dbReference>
<name>FABH_DELAS</name>
<organism>
    <name type="scientific">Delftia acidovorans (strain DSM 14801 / SPH-1)</name>
    <dbReference type="NCBI Taxonomy" id="398578"/>
    <lineage>
        <taxon>Bacteria</taxon>
        <taxon>Pseudomonadati</taxon>
        <taxon>Pseudomonadota</taxon>
        <taxon>Betaproteobacteria</taxon>
        <taxon>Burkholderiales</taxon>
        <taxon>Comamonadaceae</taxon>
        <taxon>Delftia</taxon>
    </lineage>
</organism>
<reference key="1">
    <citation type="submission" date="2007-11" db="EMBL/GenBank/DDBJ databases">
        <title>Complete sequence of Delftia acidovorans DSM 14801 / SPH-1.</title>
        <authorList>
            <person name="Copeland A."/>
            <person name="Lucas S."/>
            <person name="Lapidus A."/>
            <person name="Barry K."/>
            <person name="Glavina del Rio T."/>
            <person name="Dalin E."/>
            <person name="Tice H."/>
            <person name="Pitluck S."/>
            <person name="Lowry S."/>
            <person name="Clum A."/>
            <person name="Schmutz J."/>
            <person name="Larimer F."/>
            <person name="Land M."/>
            <person name="Hauser L."/>
            <person name="Kyrpides N."/>
            <person name="Kim E."/>
            <person name="Schleheck D."/>
            <person name="Richardson P."/>
        </authorList>
    </citation>
    <scope>NUCLEOTIDE SEQUENCE [LARGE SCALE GENOMIC DNA]</scope>
    <source>
        <strain>DSM 14801 / SPH-1</strain>
    </source>
</reference>
<accession>A9BNK6</accession>
<proteinExistence type="inferred from homology"/>
<gene>
    <name evidence="1" type="primary">fabH</name>
    <name type="ordered locus">Daci_5272</name>
</gene>
<evidence type="ECO:0000255" key="1">
    <source>
        <dbReference type="HAMAP-Rule" id="MF_01815"/>
    </source>
</evidence>